<comment type="function">
    <text evidence="3">Nonheme diiron monooxygenase involved in the biosynthesis of xanthophylls. Specific for beta-ring hydroxylations of beta-carotene. Produces beta-cryptoxanthin and zeaxanthin. Uses ferredoxin as an electron donor.</text>
</comment>
<comment type="catalytic activity">
    <reaction evidence="3">
        <text>all-trans-beta-carotene + 4 reduced [2Fe-2S]-[ferredoxin] + 2 O2 + 4 H(+) = all-trans-zeaxanthin + 4 oxidized [2Fe-2S]-[ferredoxin] + 2 H2O</text>
        <dbReference type="Rhea" id="RHEA:30331"/>
        <dbReference type="Rhea" id="RHEA-COMP:10000"/>
        <dbReference type="Rhea" id="RHEA-COMP:10001"/>
        <dbReference type="ChEBI" id="CHEBI:15377"/>
        <dbReference type="ChEBI" id="CHEBI:15378"/>
        <dbReference type="ChEBI" id="CHEBI:15379"/>
        <dbReference type="ChEBI" id="CHEBI:17579"/>
        <dbReference type="ChEBI" id="CHEBI:27547"/>
        <dbReference type="ChEBI" id="CHEBI:33737"/>
        <dbReference type="ChEBI" id="CHEBI:33738"/>
        <dbReference type="EC" id="1.14.15.24"/>
    </reaction>
    <physiologicalReaction direction="left-to-right" evidence="3">
        <dbReference type="Rhea" id="RHEA:30332"/>
    </physiologicalReaction>
</comment>
<comment type="catalytic activity">
    <reaction evidence="3">
        <text>all-trans-beta-carotene + 2 reduced [2Fe-2S]-[ferredoxin] + O2 + 2 H(+) = beta-cryptoxanthin + 2 oxidized [2Fe-2S]-[ferredoxin] + H2O</text>
        <dbReference type="Rhea" id="RHEA:30323"/>
        <dbReference type="Rhea" id="RHEA-COMP:10000"/>
        <dbReference type="Rhea" id="RHEA-COMP:10001"/>
        <dbReference type="ChEBI" id="CHEBI:10362"/>
        <dbReference type="ChEBI" id="CHEBI:15377"/>
        <dbReference type="ChEBI" id="CHEBI:15378"/>
        <dbReference type="ChEBI" id="CHEBI:15379"/>
        <dbReference type="ChEBI" id="CHEBI:17579"/>
        <dbReference type="ChEBI" id="CHEBI:33737"/>
        <dbReference type="ChEBI" id="CHEBI:33738"/>
    </reaction>
    <physiologicalReaction direction="left-to-right" evidence="3">
        <dbReference type="Rhea" id="RHEA:30324"/>
    </physiologicalReaction>
</comment>
<comment type="catalytic activity">
    <reaction evidence="3">
        <text>beta-cryptoxanthin + 2 reduced [2Fe-2S]-[ferredoxin] + O2 + 2 H(+) = all-trans-zeaxanthin + 2 oxidized [2Fe-2S]-[ferredoxin] + H2O</text>
        <dbReference type="Rhea" id="RHEA:30327"/>
        <dbReference type="Rhea" id="RHEA-COMP:10000"/>
        <dbReference type="Rhea" id="RHEA-COMP:10001"/>
        <dbReference type="ChEBI" id="CHEBI:10362"/>
        <dbReference type="ChEBI" id="CHEBI:15377"/>
        <dbReference type="ChEBI" id="CHEBI:15378"/>
        <dbReference type="ChEBI" id="CHEBI:15379"/>
        <dbReference type="ChEBI" id="CHEBI:27547"/>
        <dbReference type="ChEBI" id="CHEBI:33737"/>
        <dbReference type="ChEBI" id="CHEBI:33738"/>
    </reaction>
    <physiologicalReaction direction="left-to-right" evidence="3">
        <dbReference type="Rhea" id="RHEA:30328"/>
    </physiologicalReaction>
</comment>
<comment type="activity regulation">
    <text evidence="1">Inhibited by o-phenanthroline and 8-hydroxyquinoline.</text>
</comment>
<comment type="subcellular location">
    <subcellularLocation>
        <location evidence="5">Plastid</location>
        <location evidence="5">Chloroplast membrane</location>
        <topology evidence="5">Multi-pass membrane protein</topology>
    </subcellularLocation>
</comment>
<comment type="domain">
    <text>The histidine box domains may contain the active site and/or be involved in iron binding.</text>
</comment>
<comment type="similarity">
    <text evidence="5">Belongs to the sterol desaturase family.</text>
</comment>
<comment type="sequence caution" evidence="5">
    <conflict type="miscellaneous discrepancy">
        <sequence resource="EMBL-CDS" id="CAA70888"/>
    </conflict>
    <text>Sequencing errors.</text>
</comment>
<sequence length="308" mass="34656">MAAARISFSSTSRTSYYRHSPFLGPKPTPTTPSVYPITPFSPNLGSILRCRRRPSFTVCFVLEDDKFKTQFEAGEEDIEMKIEEQISATRLAEKLARKKSERFTYLVAAVMSSFGITSMAVMAVYYRFYWQMEGGEVPFSEMFGTFALSVGAAVGMEFWARWAHKALWHASLWHMHESHHKPREGPFELNDVFAIINAVPAIALLDYGFFHKGLIPGLCFGAGLGITVFGMAYMFVHDGLVHKRFPVGPVANVPYLRKVAAAHSLHHSEKFNGVPYGLFLGPKELEEVGGLEELEKEVNRRTRYIKGS</sequence>
<accession>O49814</accession>
<accession>A0A1U8H3T3</accession>
<accession>A0A2G2Z953</accession>
<feature type="transit peptide" description="Chloroplast" evidence="2">
    <location>
        <begin position="1"/>
        <end position="59"/>
    </location>
</feature>
<feature type="chain" id="PRO_0000412807" description="Beta-carotene hydroxylase 2, chloroplastic">
    <location>
        <begin position="60"/>
        <end position="308"/>
    </location>
</feature>
<feature type="transmembrane region" description="Helical" evidence="2">
    <location>
        <begin position="105"/>
        <end position="125"/>
    </location>
</feature>
<feature type="transmembrane region" description="Helical" evidence="2">
    <location>
        <begin position="139"/>
        <end position="159"/>
    </location>
</feature>
<feature type="transmembrane region" description="Helical" evidence="2">
    <location>
        <begin position="191"/>
        <end position="211"/>
    </location>
</feature>
<feature type="transmembrane region" description="Helical" evidence="2">
    <location>
        <begin position="215"/>
        <end position="235"/>
    </location>
</feature>
<feature type="domain" description="Fatty acid hydroxylase" evidence="2">
    <location>
        <begin position="152"/>
        <end position="279"/>
    </location>
</feature>
<feature type="short sequence motif" description="Histidine box-1" evidence="6">
    <location>
        <begin position="164"/>
        <end position="169"/>
    </location>
</feature>
<feature type="short sequence motif" description="Histidine box-2" evidence="6">
    <location>
        <begin position="176"/>
        <end position="180"/>
    </location>
</feature>
<feature type="short sequence motif" description="Histidine box-3" evidence="6">
    <location>
        <begin position="237"/>
        <end position="242"/>
    </location>
</feature>
<feature type="short sequence motif" description="Histidine box-4" evidence="6">
    <location>
        <begin position="263"/>
        <end position="267"/>
    </location>
</feature>
<organism>
    <name type="scientific">Capsicum annuum</name>
    <name type="common">Capsicum pepper</name>
    <dbReference type="NCBI Taxonomy" id="4072"/>
    <lineage>
        <taxon>Eukaryota</taxon>
        <taxon>Viridiplantae</taxon>
        <taxon>Streptophyta</taxon>
        <taxon>Embryophyta</taxon>
        <taxon>Tracheophyta</taxon>
        <taxon>Spermatophyta</taxon>
        <taxon>Magnoliopsida</taxon>
        <taxon>eudicotyledons</taxon>
        <taxon>Gunneridae</taxon>
        <taxon>Pentapetalae</taxon>
        <taxon>asterids</taxon>
        <taxon>lamiids</taxon>
        <taxon>Solanales</taxon>
        <taxon>Solanaceae</taxon>
        <taxon>Solanoideae</taxon>
        <taxon>Capsiceae</taxon>
        <taxon>Capsicum</taxon>
    </lineage>
</organism>
<proteinExistence type="evidence at protein level"/>
<protein>
    <recommendedName>
        <fullName evidence="5">Beta-carotene hydroxylase 2, chloroplastic</fullName>
        <ecNumber evidence="3">1.14.15.24</ecNumber>
    </recommendedName>
</protein>
<reference key="1">
    <citation type="journal article" date="1998" name="Biochim. Biophys. Acta">
        <title>Xanthophyll biosynthesis: molecular and functional characterization of carotenoid hydroxylases from pepper fruits (Capsicum annuum L.).</title>
        <authorList>
            <person name="Bouvier F."/>
            <person name="Keller Y."/>
            <person name="d'Harlingue A."/>
            <person name="Camara B."/>
        </authorList>
    </citation>
    <scope>NUCLEOTIDE SEQUENCE [MRNA]</scope>
    <scope>FUNCTION</scope>
    <scope>CATALYTIC ACTIVITY</scope>
    <scope>MOTIF</scope>
</reference>
<reference key="2">
    <citation type="journal article" date="2014" name="Proc. Natl. Acad. Sci. U.S.A.">
        <title>Whole-genome sequencing of cultivated and wild peppers provides insights into Capsicum domestication and specialization.</title>
        <authorList>
            <person name="Qin C."/>
            <person name="Yu C."/>
            <person name="Shen Y."/>
            <person name="Fang X."/>
            <person name="Chen L."/>
            <person name="Min J."/>
            <person name="Cheng J."/>
            <person name="Zhao S."/>
            <person name="Xu M."/>
            <person name="Luo Y."/>
            <person name="Yang Y."/>
            <person name="Wu Z."/>
            <person name="Mao L."/>
            <person name="Wu H."/>
            <person name="Ling-Hu C."/>
            <person name="Zhou H."/>
            <person name="Lin H."/>
            <person name="Gonzalez-Morales S."/>
            <person name="Trejo-Saavedra D.L."/>
            <person name="Tian H."/>
            <person name="Tang X."/>
            <person name="Zhao M."/>
            <person name="Huang Z."/>
            <person name="Zhou A."/>
            <person name="Yao X."/>
            <person name="Cui J."/>
            <person name="Li W."/>
            <person name="Chen Z."/>
            <person name="Feng Y."/>
            <person name="Niu Y."/>
            <person name="Bi S."/>
            <person name="Yang X."/>
            <person name="Li W."/>
            <person name="Cai H."/>
            <person name="Luo X."/>
            <person name="Montes-Hernandez S."/>
            <person name="Leyva-Gonzalez M.A."/>
            <person name="Xiong Z."/>
            <person name="He X."/>
            <person name="Bai L."/>
            <person name="Tan S."/>
            <person name="Tang X."/>
            <person name="Liu D."/>
            <person name="Liu J."/>
            <person name="Zhang S."/>
            <person name="Chen M."/>
            <person name="Zhang L."/>
            <person name="Zhang L."/>
            <person name="Zhang Y."/>
            <person name="Liao W."/>
            <person name="Zhang Y."/>
            <person name="Wang M."/>
            <person name="Lv X."/>
            <person name="Wen B."/>
            <person name="Liu H."/>
            <person name="Luan H."/>
            <person name="Zhang Y."/>
            <person name="Yang S."/>
            <person name="Wang X."/>
            <person name="Xu J."/>
            <person name="Li X."/>
            <person name="Li S."/>
            <person name="Wang J."/>
            <person name="Palloix A."/>
            <person name="Bosland P.W."/>
            <person name="Li Y."/>
            <person name="Krogh A."/>
            <person name="Rivera-Bustamante R.F."/>
            <person name="Herrera-Estrella L."/>
            <person name="Yin Y."/>
            <person name="Yu J."/>
            <person name="Hu K."/>
            <person name="Zhang Z."/>
        </authorList>
    </citation>
    <scope>NUCLEOTIDE SEQUENCE [LARGE SCALE GENOMIC DNA]</scope>
    <source>
        <strain>cv. Zunla-1</strain>
    </source>
</reference>
<reference key="3">
    <citation type="journal article" date="2017" name="Genome Biol.">
        <title>New reference genome sequences of hot pepper reveal the massive evolution of plant disease-resistance genes by retroduplication.</title>
        <authorList>
            <person name="Kim S."/>
            <person name="Park J."/>
            <person name="Yeom S.I."/>
            <person name="Kim Y.M."/>
            <person name="Seo E."/>
            <person name="Kim K.T."/>
            <person name="Kim M.S."/>
            <person name="Lee J.M."/>
            <person name="Cheong K."/>
            <person name="Shin H.S."/>
            <person name="Kim S.B."/>
            <person name="Han K."/>
            <person name="Lee J."/>
            <person name="Park M."/>
            <person name="Lee H.A."/>
            <person name="Lee H.Y."/>
            <person name="Lee Y."/>
            <person name="Oh S."/>
            <person name="Lee J.H."/>
            <person name="Choi E."/>
            <person name="Choi E."/>
            <person name="Lee S.E."/>
            <person name="Jeon J."/>
            <person name="Kim H."/>
            <person name="Choi G."/>
            <person name="Song H."/>
            <person name="Lee J."/>
            <person name="Lee S.C."/>
            <person name="Kwon J.K."/>
            <person name="Lee H.Y."/>
            <person name="Koo N."/>
            <person name="Hong Y."/>
            <person name="Kim R.W."/>
            <person name="Kang W.H."/>
            <person name="Huh J.H."/>
            <person name="Kang B.C."/>
            <person name="Yang T.J."/>
            <person name="Lee Y.H."/>
            <person name="Bennetzen J.L."/>
            <person name="Choi D."/>
        </authorList>
    </citation>
    <scope>NUCLEOTIDE SEQUENCE [LARGE SCALE GENOMIC DNA]</scope>
    <source>
        <strain>cv. CM334</strain>
    </source>
</reference>
<name>BCH2_CAPAN</name>
<dbReference type="EC" id="1.14.15.24" evidence="3"/>
<dbReference type="EMBL" id="Y09722">
    <property type="protein sequence ID" value="CAA70888.1"/>
    <property type="status" value="ALT_SEQ"/>
    <property type="molecule type" value="mRNA"/>
</dbReference>
<dbReference type="EMBL" id="AYRZ02000006">
    <property type="protein sequence ID" value="PHT78526.1"/>
    <property type="molecule type" value="Genomic_DNA"/>
</dbReference>
<dbReference type="RefSeq" id="XP_016575733.1">
    <property type="nucleotide sequence ID" value="XM_016720247.1"/>
</dbReference>
<dbReference type="STRING" id="4072.A0A1U8H3T3"/>
<dbReference type="SwissLipids" id="SLP:000001509"/>
<dbReference type="EnsemblPlants" id="PHT78526">
    <property type="protein sequence ID" value="PHT78526"/>
    <property type="gene ID" value="T459_16578"/>
</dbReference>
<dbReference type="Gramene" id="PHT78526">
    <property type="protein sequence ID" value="PHT78526"/>
    <property type="gene ID" value="T459_16578"/>
</dbReference>
<dbReference type="KEGG" id="ag:CAA70888"/>
<dbReference type="OMA" id="TIYFRHS"/>
<dbReference type="OrthoDB" id="9990796at2759"/>
<dbReference type="BRENDA" id="1.14.15.24">
    <property type="organism ID" value="1169"/>
</dbReference>
<dbReference type="Proteomes" id="UP000222542">
    <property type="component" value="Chromosome 6"/>
</dbReference>
<dbReference type="GO" id="GO:0031969">
    <property type="term" value="C:chloroplast membrane"/>
    <property type="evidence" value="ECO:0007669"/>
    <property type="project" value="UniProtKB-SubCell"/>
</dbReference>
<dbReference type="GO" id="GO:0010291">
    <property type="term" value="F:beta-carotene 3-hydroxylase activity"/>
    <property type="evidence" value="ECO:0007669"/>
    <property type="project" value="UniProtKB-EC"/>
</dbReference>
<dbReference type="GO" id="GO:0016787">
    <property type="term" value="F:hydrolase activity"/>
    <property type="evidence" value="ECO:0007669"/>
    <property type="project" value="UniProtKB-KW"/>
</dbReference>
<dbReference type="GO" id="GO:0046872">
    <property type="term" value="F:metal ion binding"/>
    <property type="evidence" value="ECO:0007669"/>
    <property type="project" value="UniProtKB-KW"/>
</dbReference>
<dbReference type="GO" id="GO:0016117">
    <property type="term" value="P:carotenoid biosynthetic process"/>
    <property type="evidence" value="ECO:0007669"/>
    <property type="project" value="UniProtKB-KW"/>
</dbReference>
<dbReference type="InterPro" id="IPR045019">
    <property type="entry name" value="BETA-OHASE-like"/>
</dbReference>
<dbReference type="PANTHER" id="PTHR31899">
    <property type="entry name" value="BETA-CAROTENE 3-HYDROXYLASE 1, CHLOROPLASTIC"/>
    <property type="match status" value="1"/>
</dbReference>
<dbReference type="PANTHER" id="PTHR31899:SF10">
    <property type="entry name" value="BETA-CAROTENE HYDROXYLASE 2, CHLOROPLASTIC"/>
    <property type="match status" value="1"/>
</dbReference>
<keyword id="KW-0125">Carotenoid biosynthesis</keyword>
<keyword id="KW-0150">Chloroplast</keyword>
<keyword id="KW-0378">Hydrolase</keyword>
<keyword id="KW-0408">Iron</keyword>
<keyword id="KW-0472">Membrane</keyword>
<keyword id="KW-0479">Metal-binding</keyword>
<keyword id="KW-0520">NAD</keyword>
<keyword id="KW-0560">Oxidoreductase</keyword>
<keyword id="KW-0934">Plastid</keyword>
<keyword id="KW-1185">Reference proteome</keyword>
<keyword id="KW-0809">Transit peptide</keyword>
<keyword id="KW-0812">Transmembrane</keyword>
<keyword id="KW-1133">Transmembrane helix</keyword>
<evidence type="ECO:0000250" key="1">
    <source>
        <dbReference type="UniProtKB" id="O49815"/>
    </source>
</evidence>
<evidence type="ECO:0000255" key="2"/>
<evidence type="ECO:0000269" key="3">
    <source>
    </source>
</evidence>
<evidence type="ECO:0000303" key="4">
    <source>
    </source>
</evidence>
<evidence type="ECO:0000305" key="5"/>
<evidence type="ECO:0000305" key="6">
    <source>
    </source>
</evidence>
<evidence type="ECO:0000312" key="7">
    <source>
        <dbReference type="EMBL" id="PHT78526.1"/>
    </source>
</evidence>
<gene>
    <name evidence="4" type="primary">CA2</name>
    <name type="ORF">LOC107873401</name>
    <name evidence="7" type="ORF">T459_16578</name>
</gene>